<keyword id="KW-0687">Ribonucleoprotein</keyword>
<keyword id="KW-0689">Ribosomal protein</keyword>
<keyword id="KW-0694">RNA-binding</keyword>
<keyword id="KW-0699">rRNA-binding</keyword>
<evidence type="ECO:0000255" key="1">
    <source>
        <dbReference type="HAMAP-Rule" id="MF_00501"/>
    </source>
</evidence>
<evidence type="ECO:0000256" key="2">
    <source>
        <dbReference type="SAM" id="MobiDB-lite"/>
    </source>
</evidence>
<evidence type="ECO:0000305" key="3"/>
<reference key="1">
    <citation type="journal article" date="2006" name="Science">
        <title>Genomic islands and the ecology and evolution of Prochlorococcus.</title>
        <authorList>
            <person name="Coleman M.L."/>
            <person name="Sullivan M.B."/>
            <person name="Martiny A.C."/>
            <person name="Steglich C."/>
            <person name="Barry K."/>
            <person name="Delong E.F."/>
            <person name="Chisholm S.W."/>
        </authorList>
    </citation>
    <scope>NUCLEOTIDE SEQUENCE [LARGE SCALE GENOMIC DNA]</scope>
    <source>
        <strain>MIT 9312</strain>
    </source>
</reference>
<dbReference type="EMBL" id="CP000111">
    <property type="protein sequence ID" value="ABB50683.1"/>
    <property type="status" value="ALT_INIT"/>
    <property type="molecule type" value="Genomic_DNA"/>
</dbReference>
<dbReference type="RefSeq" id="WP_011377165.1">
    <property type="nucleotide sequence ID" value="NC_007577.1"/>
</dbReference>
<dbReference type="STRING" id="74546.PMT9312_1623"/>
<dbReference type="KEGG" id="pmi:PMT9312_1623"/>
<dbReference type="eggNOG" id="COG0254">
    <property type="taxonomic scope" value="Bacteria"/>
</dbReference>
<dbReference type="HOGENOM" id="CLU_114306_1_2_3"/>
<dbReference type="OrthoDB" id="9803251at2"/>
<dbReference type="Proteomes" id="UP000002715">
    <property type="component" value="Chromosome"/>
</dbReference>
<dbReference type="GO" id="GO:1990904">
    <property type="term" value="C:ribonucleoprotein complex"/>
    <property type="evidence" value="ECO:0007669"/>
    <property type="project" value="UniProtKB-KW"/>
</dbReference>
<dbReference type="GO" id="GO:0005840">
    <property type="term" value="C:ribosome"/>
    <property type="evidence" value="ECO:0007669"/>
    <property type="project" value="UniProtKB-KW"/>
</dbReference>
<dbReference type="GO" id="GO:0019843">
    <property type="term" value="F:rRNA binding"/>
    <property type="evidence" value="ECO:0007669"/>
    <property type="project" value="UniProtKB-KW"/>
</dbReference>
<dbReference type="GO" id="GO:0003735">
    <property type="term" value="F:structural constituent of ribosome"/>
    <property type="evidence" value="ECO:0007669"/>
    <property type="project" value="InterPro"/>
</dbReference>
<dbReference type="GO" id="GO:0006412">
    <property type="term" value="P:translation"/>
    <property type="evidence" value="ECO:0007669"/>
    <property type="project" value="UniProtKB-UniRule"/>
</dbReference>
<dbReference type="Gene3D" id="4.10.830.30">
    <property type="entry name" value="Ribosomal protein L31"/>
    <property type="match status" value="1"/>
</dbReference>
<dbReference type="HAMAP" id="MF_00501">
    <property type="entry name" value="Ribosomal_bL31_1"/>
    <property type="match status" value="1"/>
</dbReference>
<dbReference type="InterPro" id="IPR034704">
    <property type="entry name" value="Ribosomal_bL28/bL31-like_sf"/>
</dbReference>
<dbReference type="InterPro" id="IPR002150">
    <property type="entry name" value="Ribosomal_bL31"/>
</dbReference>
<dbReference type="InterPro" id="IPR027491">
    <property type="entry name" value="Ribosomal_bL31_A"/>
</dbReference>
<dbReference type="InterPro" id="IPR042105">
    <property type="entry name" value="Ribosomal_bL31_sf"/>
</dbReference>
<dbReference type="NCBIfam" id="TIGR00105">
    <property type="entry name" value="L31"/>
    <property type="match status" value="1"/>
</dbReference>
<dbReference type="NCBIfam" id="NF000612">
    <property type="entry name" value="PRK00019.1"/>
    <property type="match status" value="1"/>
</dbReference>
<dbReference type="NCBIfam" id="NF001809">
    <property type="entry name" value="PRK00528.1"/>
    <property type="match status" value="1"/>
</dbReference>
<dbReference type="PANTHER" id="PTHR33280">
    <property type="entry name" value="50S RIBOSOMAL PROTEIN L31, CHLOROPLASTIC"/>
    <property type="match status" value="1"/>
</dbReference>
<dbReference type="PANTHER" id="PTHR33280:SF1">
    <property type="entry name" value="LARGE RIBOSOMAL SUBUNIT PROTEIN BL31C"/>
    <property type="match status" value="1"/>
</dbReference>
<dbReference type="Pfam" id="PF01197">
    <property type="entry name" value="Ribosomal_L31"/>
    <property type="match status" value="1"/>
</dbReference>
<dbReference type="PRINTS" id="PR01249">
    <property type="entry name" value="RIBOSOMALL31"/>
</dbReference>
<dbReference type="SUPFAM" id="SSF143800">
    <property type="entry name" value="L28p-like"/>
    <property type="match status" value="1"/>
</dbReference>
<dbReference type="PROSITE" id="PS01143">
    <property type="entry name" value="RIBOSOMAL_L31"/>
    <property type="match status" value="1"/>
</dbReference>
<name>RL31_PROM9</name>
<protein>
    <recommendedName>
        <fullName evidence="1">Large ribosomal subunit protein bL31</fullName>
    </recommendedName>
    <alternativeName>
        <fullName evidence="3">50S ribosomal protein L31</fullName>
    </alternativeName>
</protein>
<gene>
    <name evidence="1" type="primary">rpmE</name>
    <name evidence="1" type="synonym">rpl31</name>
    <name type="ordered locus">PMT9312_1623</name>
</gene>
<proteinExistence type="inferred from homology"/>
<sequence>MPKSEIHPKWYPDAKVICNGEVVMTTGSTQPELHVDVWSGNHPFFTGTQKILDTEGRVDRFMKKYGMGSANSATSKEQKEEKDSNK</sequence>
<comment type="function">
    <text evidence="1">Binds the 23S rRNA.</text>
</comment>
<comment type="subunit">
    <text evidence="1">Part of the 50S ribosomal subunit.</text>
</comment>
<comment type="similarity">
    <text evidence="1">Belongs to the bacterial ribosomal protein bL31 family. Type A subfamily.</text>
</comment>
<comment type="sequence caution" evidence="3">
    <conflict type="erroneous initiation">
        <sequence resource="EMBL-CDS" id="ABB50683"/>
    </conflict>
</comment>
<feature type="chain" id="PRO_0000259207" description="Large ribosomal subunit protein bL31">
    <location>
        <begin position="1"/>
        <end position="86"/>
    </location>
</feature>
<feature type="region of interest" description="Disordered" evidence="2">
    <location>
        <begin position="65"/>
        <end position="86"/>
    </location>
</feature>
<feature type="compositionally biased region" description="Basic and acidic residues" evidence="2">
    <location>
        <begin position="76"/>
        <end position="86"/>
    </location>
</feature>
<organism>
    <name type="scientific">Prochlorococcus marinus (strain MIT 9312)</name>
    <dbReference type="NCBI Taxonomy" id="74546"/>
    <lineage>
        <taxon>Bacteria</taxon>
        <taxon>Bacillati</taxon>
        <taxon>Cyanobacteriota</taxon>
        <taxon>Cyanophyceae</taxon>
        <taxon>Synechococcales</taxon>
        <taxon>Prochlorococcaceae</taxon>
        <taxon>Prochlorococcus</taxon>
    </lineage>
</organism>
<accession>Q318L2</accession>